<feature type="chain" id="PRO_0000073369" description="ATP synthase gamma chain">
    <location>
        <begin position="1"/>
        <end position="286"/>
    </location>
</feature>
<proteinExistence type="inferred from homology"/>
<reference key="1">
    <citation type="journal article" date="2002" name="Nat. Biotechnol.">
        <title>Genome sequence of the dissimilatory metal ion-reducing bacterium Shewanella oneidensis.</title>
        <authorList>
            <person name="Heidelberg J.F."/>
            <person name="Paulsen I.T."/>
            <person name="Nelson K.E."/>
            <person name="Gaidos E.J."/>
            <person name="Nelson W.C."/>
            <person name="Read T.D."/>
            <person name="Eisen J.A."/>
            <person name="Seshadri R."/>
            <person name="Ward N.L."/>
            <person name="Methe B.A."/>
            <person name="Clayton R.A."/>
            <person name="Meyer T."/>
            <person name="Tsapin A."/>
            <person name="Scott J."/>
            <person name="Beanan M.J."/>
            <person name="Brinkac L.M."/>
            <person name="Daugherty S.C."/>
            <person name="DeBoy R.T."/>
            <person name="Dodson R.J."/>
            <person name="Durkin A.S."/>
            <person name="Haft D.H."/>
            <person name="Kolonay J.F."/>
            <person name="Madupu R."/>
            <person name="Peterson J.D."/>
            <person name="Umayam L.A."/>
            <person name="White O."/>
            <person name="Wolf A.M."/>
            <person name="Vamathevan J.J."/>
            <person name="Weidman J.F."/>
            <person name="Impraim M."/>
            <person name="Lee K."/>
            <person name="Berry K.J."/>
            <person name="Lee C."/>
            <person name="Mueller J."/>
            <person name="Khouri H.M."/>
            <person name="Gill J."/>
            <person name="Utterback T.R."/>
            <person name="McDonald L.A."/>
            <person name="Feldblyum T.V."/>
            <person name="Smith H.O."/>
            <person name="Venter J.C."/>
            <person name="Nealson K.H."/>
            <person name="Fraser C.M."/>
        </authorList>
    </citation>
    <scope>NUCLEOTIDE SEQUENCE [LARGE SCALE GENOMIC DNA]</scope>
    <source>
        <strain>ATCC 700550 / JCM 31522 / CIP 106686 / LMG 19005 / NCIMB 14063 / MR-1</strain>
    </source>
</reference>
<evidence type="ECO:0000255" key="1">
    <source>
        <dbReference type="HAMAP-Rule" id="MF_00815"/>
    </source>
</evidence>
<accession>Q8E8B9</accession>
<gene>
    <name evidence="1" type="primary">atpG</name>
    <name type="ordered locus">SO_4748</name>
</gene>
<comment type="function">
    <text evidence="1">Produces ATP from ADP in the presence of a proton gradient across the membrane. The gamma chain is believed to be important in regulating ATPase activity and the flow of protons through the CF(0) complex.</text>
</comment>
<comment type="subunit">
    <text evidence="1">F-type ATPases have 2 components, CF(1) - the catalytic core - and CF(0) - the membrane proton channel. CF(1) has five subunits: alpha(3), beta(3), gamma(1), delta(1), epsilon(1). CF(0) has three main subunits: a, b and c.</text>
</comment>
<comment type="subcellular location">
    <subcellularLocation>
        <location evidence="1">Cell inner membrane</location>
        <topology evidence="1">Peripheral membrane protein</topology>
    </subcellularLocation>
</comment>
<comment type="similarity">
    <text evidence="1">Belongs to the ATPase gamma chain family.</text>
</comment>
<dbReference type="EMBL" id="AE014299">
    <property type="protein sequence ID" value="AAN57707.1"/>
    <property type="molecule type" value="Genomic_DNA"/>
</dbReference>
<dbReference type="RefSeq" id="NP_720264.1">
    <property type="nucleotide sequence ID" value="NC_004347.2"/>
</dbReference>
<dbReference type="RefSeq" id="WP_011074331.1">
    <property type="nucleotide sequence ID" value="NZ_CP053946.1"/>
</dbReference>
<dbReference type="SMR" id="Q8E8B9"/>
<dbReference type="STRING" id="211586.SO_4748"/>
<dbReference type="PaxDb" id="211586-SO_4748"/>
<dbReference type="KEGG" id="son:SO_4748"/>
<dbReference type="PATRIC" id="fig|211586.12.peg.4605"/>
<dbReference type="eggNOG" id="COG0224">
    <property type="taxonomic scope" value="Bacteria"/>
</dbReference>
<dbReference type="HOGENOM" id="CLU_050669_0_1_6"/>
<dbReference type="OrthoDB" id="9812769at2"/>
<dbReference type="PhylomeDB" id="Q8E8B9"/>
<dbReference type="BioCyc" id="SONE211586:G1GMP-4393-MONOMER"/>
<dbReference type="Proteomes" id="UP000008186">
    <property type="component" value="Chromosome"/>
</dbReference>
<dbReference type="GO" id="GO:0005886">
    <property type="term" value="C:plasma membrane"/>
    <property type="evidence" value="ECO:0007669"/>
    <property type="project" value="UniProtKB-SubCell"/>
</dbReference>
<dbReference type="GO" id="GO:0045259">
    <property type="term" value="C:proton-transporting ATP synthase complex"/>
    <property type="evidence" value="ECO:0007669"/>
    <property type="project" value="UniProtKB-KW"/>
</dbReference>
<dbReference type="GO" id="GO:0005524">
    <property type="term" value="F:ATP binding"/>
    <property type="evidence" value="ECO:0007669"/>
    <property type="project" value="UniProtKB-UniRule"/>
</dbReference>
<dbReference type="GO" id="GO:0046933">
    <property type="term" value="F:proton-transporting ATP synthase activity, rotational mechanism"/>
    <property type="evidence" value="ECO:0007669"/>
    <property type="project" value="UniProtKB-UniRule"/>
</dbReference>
<dbReference type="GO" id="GO:0015986">
    <property type="term" value="P:proton motive force-driven ATP synthesis"/>
    <property type="evidence" value="ECO:0000318"/>
    <property type="project" value="GO_Central"/>
</dbReference>
<dbReference type="GO" id="GO:0042777">
    <property type="term" value="P:proton motive force-driven plasma membrane ATP synthesis"/>
    <property type="evidence" value="ECO:0007669"/>
    <property type="project" value="UniProtKB-UniRule"/>
</dbReference>
<dbReference type="CDD" id="cd12151">
    <property type="entry name" value="F1-ATPase_gamma"/>
    <property type="match status" value="1"/>
</dbReference>
<dbReference type="FunFam" id="1.10.287.80:FF:000005">
    <property type="entry name" value="ATP synthase gamma chain"/>
    <property type="match status" value="2"/>
</dbReference>
<dbReference type="FunFam" id="3.40.1380.10:FF:000001">
    <property type="entry name" value="ATP synthase gamma chain"/>
    <property type="match status" value="1"/>
</dbReference>
<dbReference type="Gene3D" id="3.40.1380.10">
    <property type="match status" value="1"/>
</dbReference>
<dbReference type="Gene3D" id="1.10.287.80">
    <property type="entry name" value="ATP synthase, gamma subunit, helix hairpin domain"/>
    <property type="match status" value="1"/>
</dbReference>
<dbReference type="HAMAP" id="MF_00815">
    <property type="entry name" value="ATP_synth_gamma_bact"/>
    <property type="match status" value="1"/>
</dbReference>
<dbReference type="InterPro" id="IPR035968">
    <property type="entry name" value="ATP_synth_F1_ATPase_gsu"/>
</dbReference>
<dbReference type="InterPro" id="IPR000131">
    <property type="entry name" value="ATP_synth_F1_gsu"/>
</dbReference>
<dbReference type="InterPro" id="IPR023632">
    <property type="entry name" value="ATP_synth_F1_gsu_CS"/>
</dbReference>
<dbReference type="NCBIfam" id="TIGR01146">
    <property type="entry name" value="ATPsyn_F1gamma"/>
    <property type="match status" value="1"/>
</dbReference>
<dbReference type="NCBIfam" id="NF004144">
    <property type="entry name" value="PRK05621.1-1"/>
    <property type="match status" value="1"/>
</dbReference>
<dbReference type="PANTHER" id="PTHR11693">
    <property type="entry name" value="ATP SYNTHASE GAMMA CHAIN"/>
    <property type="match status" value="1"/>
</dbReference>
<dbReference type="PANTHER" id="PTHR11693:SF22">
    <property type="entry name" value="ATP SYNTHASE SUBUNIT GAMMA, MITOCHONDRIAL"/>
    <property type="match status" value="1"/>
</dbReference>
<dbReference type="Pfam" id="PF00231">
    <property type="entry name" value="ATP-synt"/>
    <property type="match status" value="1"/>
</dbReference>
<dbReference type="PRINTS" id="PR00126">
    <property type="entry name" value="ATPASEGAMMA"/>
</dbReference>
<dbReference type="SUPFAM" id="SSF52943">
    <property type="entry name" value="ATP synthase (F1-ATPase), gamma subunit"/>
    <property type="match status" value="1"/>
</dbReference>
<dbReference type="PROSITE" id="PS00153">
    <property type="entry name" value="ATPASE_GAMMA"/>
    <property type="match status" value="1"/>
</dbReference>
<keyword id="KW-0066">ATP synthesis</keyword>
<keyword id="KW-0997">Cell inner membrane</keyword>
<keyword id="KW-1003">Cell membrane</keyword>
<keyword id="KW-0139">CF(1)</keyword>
<keyword id="KW-0375">Hydrogen ion transport</keyword>
<keyword id="KW-0406">Ion transport</keyword>
<keyword id="KW-0472">Membrane</keyword>
<keyword id="KW-1185">Reference proteome</keyword>
<keyword id="KW-0813">Transport</keyword>
<organism>
    <name type="scientific">Shewanella oneidensis (strain ATCC 700550 / JCM 31522 / CIP 106686 / LMG 19005 / NCIMB 14063 / MR-1)</name>
    <dbReference type="NCBI Taxonomy" id="211586"/>
    <lineage>
        <taxon>Bacteria</taxon>
        <taxon>Pseudomonadati</taxon>
        <taxon>Pseudomonadota</taxon>
        <taxon>Gammaproteobacteria</taxon>
        <taxon>Alteromonadales</taxon>
        <taxon>Shewanellaceae</taxon>
        <taxon>Shewanella</taxon>
    </lineage>
</organism>
<sequence>MAGAKEIKTKIASVKNTQKITSAMEMVAASKMRRAQERMAASRPYAESMRKVIGHVAQGSLEYKHPYLEVREAKRVGYIVVATDRGLCGGLNVNLFKKVVADVKSWKEQGAEFEFCPIGARSVQFFKSFGGQVSAQASGLGDAPKLNDLIGTVQVMLEAYNEGKLDRLYVVFNKFVNTMTQTPVIEQLLPLPKSEDDEVAHRWDYIYEPDPKALLDTLLVRYVESQVYQGVVENIASEQAARMVAMKAATDNAGTLIDDLQLVYNKARQAAITQELSEIVSGASAV</sequence>
<name>ATPG_SHEON</name>
<protein>
    <recommendedName>
        <fullName evidence="1">ATP synthase gamma chain</fullName>
    </recommendedName>
    <alternativeName>
        <fullName evidence="1">ATP synthase F1 sector gamma subunit</fullName>
    </alternativeName>
    <alternativeName>
        <fullName evidence="1">F-ATPase gamma subunit</fullName>
    </alternativeName>
</protein>